<feature type="chain" id="PRO_0000063412" description="Chaperonin GroEL">
    <location>
        <begin position="1"/>
        <end position="542"/>
    </location>
</feature>
<feature type="region of interest" description="Disordered" evidence="2">
    <location>
        <begin position="521"/>
        <end position="542"/>
    </location>
</feature>
<feature type="compositionally biased region" description="Gly residues" evidence="2">
    <location>
        <begin position="533"/>
        <end position="542"/>
    </location>
</feature>
<feature type="binding site" evidence="1">
    <location>
        <begin position="29"/>
        <end position="32"/>
    </location>
    <ligand>
        <name>ATP</name>
        <dbReference type="ChEBI" id="CHEBI:30616"/>
    </ligand>
</feature>
<feature type="binding site" evidence="1">
    <location>
        <begin position="86"/>
        <end position="90"/>
    </location>
    <ligand>
        <name>ATP</name>
        <dbReference type="ChEBI" id="CHEBI:30616"/>
    </ligand>
</feature>
<feature type="binding site" evidence="1">
    <location>
        <position position="413"/>
    </location>
    <ligand>
        <name>ATP</name>
        <dbReference type="ChEBI" id="CHEBI:30616"/>
    </ligand>
</feature>
<feature type="binding site" evidence="1">
    <location>
        <begin position="476"/>
        <end position="478"/>
    </location>
    <ligand>
        <name>ATP</name>
        <dbReference type="ChEBI" id="CHEBI:30616"/>
    </ligand>
</feature>
<feature type="binding site" evidence="1">
    <location>
        <position position="492"/>
    </location>
    <ligand>
        <name>ATP</name>
        <dbReference type="ChEBI" id="CHEBI:30616"/>
    </ligand>
</feature>
<evidence type="ECO:0000255" key="1">
    <source>
        <dbReference type="HAMAP-Rule" id="MF_00600"/>
    </source>
</evidence>
<evidence type="ECO:0000256" key="2">
    <source>
        <dbReference type="SAM" id="MobiDB-lite"/>
    </source>
</evidence>
<keyword id="KW-0067">ATP-binding</keyword>
<keyword id="KW-0143">Chaperone</keyword>
<keyword id="KW-0963">Cytoplasm</keyword>
<keyword id="KW-0413">Isomerase</keyword>
<keyword id="KW-0547">Nucleotide-binding</keyword>
<sequence length="542" mass="57301">MAKDIKFSEDARRAMLRGVDQLANAVKVTLGPKGRNVVLEKKFGSPLITNDGVTIAKEIELEDPFENMGAKLVSEVASKTNDVAGDGTTTATVLAQAMIQEGLKNVTAGANPVGVRRGIEKAVATAIEELKAISKPIESKESIAQVAAISSGDEEVGKLIAEAMERVGNDGVITIEESKGFATELDVVEGMQFDRGYTSPYMVTDSDKMEAVLEKPYILITDKKINNIQEILSVLEQVVQQGRPMLIIAEDVEGEAQATLVLNKLRGTFNVVAVKAPGFGDRRKAMLEDIAVLTGGQVITEDLGLELKTATVDQLGTANKVVVTKDDTTIVEGAGDSTQISARVNQIRAQMEETTSEFDREKLQERLAKLAGGVAVVKVGAATETELKERKLRIEDALNSTRAAVEEGIVAGGGTALVSIYNKVAALEAEGDVETGINIVLRSLEEPVRQIAHNAGLEGSVIVERLKHEAVGVGFNAANGEWVNMIDAGIVDPTKVTRSALQNASSVAALLLTTEAVVADQPDENGPAAGPDMGMGGMGGMM</sequence>
<organism>
    <name type="scientific">Listeria innocua serovar 6a (strain ATCC BAA-680 / CLIP 11262)</name>
    <dbReference type="NCBI Taxonomy" id="272626"/>
    <lineage>
        <taxon>Bacteria</taxon>
        <taxon>Bacillati</taxon>
        <taxon>Bacillota</taxon>
        <taxon>Bacilli</taxon>
        <taxon>Bacillales</taxon>
        <taxon>Listeriaceae</taxon>
        <taxon>Listeria</taxon>
    </lineage>
</organism>
<comment type="function">
    <text evidence="1">Together with its co-chaperonin GroES, plays an essential role in assisting protein folding. The GroEL-GroES system forms a nano-cage that allows encapsulation of the non-native substrate proteins and provides a physical environment optimized to promote and accelerate protein folding.</text>
</comment>
<comment type="catalytic activity">
    <reaction evidence="1">
        <text>ATP + H2O + a folded polypeptide = ADP + phosphate + an unfolded polypeptide.</text>
        <dbReference type="EC" id="5.6.1.7"/>
    </reaction>
</comment>
<comment type="subunit">
    <text evidence="1">Forms a cylinder of 14 subunits composed of two heptameric rings stacked back-to-back. Interacts with the co-chaperonin GroES.</text>
</comment>
<comment type="subcellular location">
    <subcellularLocation>
        <location evidence="1">Cytoplasm</location>
    </subcellularLocation>
</comment>
<comment type="similarity">
    <text evidence="1">Belongs to the chaperonin (HSP60) family.</text>
</comment>
<accession>Q929V0</accession>
<proteinExistence type="inferred from homology"/>
<name>CH60_LISIN</name>
<protein>
    <recommendedName>
        <fullName evidence="1">Chaperonin GroEL</fullName>
        <ecNumber evidence="1">5.6.1.7</ecNumber>
    </recommendedName>
    <alternativeName>
        <fullName evidence="1">60 kDa chaperonin</fullName>
    </alternativeName>
    <alternativeName>
        <fullName evidence="1">Chaperonin-60</fullName>
        <shortName evidence="1">Cpn60</shortName>
    </alternativeName>
</protein>
<dbReference type="EC" id="5.6.1.7" evidence="1"/>
<dbReference type="EMBL" id="AL596171">
    <property type="protein sequence ID" value="CAC97403.1"/>
    <property type="molecule type" value="Genomic_DNA"/>
</dbReference>
<dbReference type="PIR" id="AC1704">
    <property type="entry name" value="AC1704"/>
</dbReference>
<dbReference type="RefSeq" id="WP_010991049.1">
    <property type="nucleotide sequence ID" value="NC_003212.1"/>
</dbReference>
<dbReference type="SMR" id="Q929V0"/>
<dbReference type="STRING" id="272626.gene:17566531"/>
<dbReference type="KEGG" id="lin:groEL"/>
<dbReference type="eggNOG" id="COG0459">
    <property type="taxonomic scope" value="Bacteria"/>
</dbReference>
<dbReference type="HOGENOM" id="CLU_016503_3_0_9"/>
<dbReference type="OrthoDB" id="9766614at2"/>
<dbReference type="Proteomes" id="UP000002513">
    <property type="component" value="Chromosome"/>
</dbReference>
<dbReference type="GO" id="GO:0005737">
    <property type="term" value="C:cytoplasm"/>
    <property type="evidence" value="ECO:0007669"/>
    <property type="project" value="UniProtKB-SubCell"/>
</dbReference>
<dbReference type="GO" id="GO:0005524">
    <property type="term" value="F:ATP binding"/>
    <property type="evidence" value="ECO:0007669"/>
    <property type="project" value="UniProtKB-UniRule"/>
</dbReference>
<dbReference type="GO" id="GO:0140662">
    <property type="term" value="F:ATP-dependent protein folding chaperone"/>
    <property type="evidence" value="ECO:0007669"/>
    <property type="project" value="InterPro"/>
</dbReference>
<dbReference type="GO" id="GO:0016853">
    <property type="term" value="F:isomerase activity"/>
    <property type="evidence" value="ECO:0007669"/>
    <property type="project" value="UniProtKB-KW"/>
</dbReference>
<dbReference type="GO" id="GO:0051082">
    <property type="term" value="F:unfolded protein binding"/>
    <property type="evidence" value="ECO:0007669"/>
    <property type="project" value="UniProtKB-UniRule"/>
</dbReference>
<dbReference type="GO" id="GO:0042026">
    <property type="term" value="P:protein refolding"/>
    <property type="evidence" value="ECO:0007669"/>
    <property type="project" value="UniProtKB-UniRule"/>
</dbReference>
<dbReference type="CDD" id="cd03344">
    <property type="entry name" value="GroEL"/>
    <property type="match status" value="1"/>
</dbReference>
<dbReference type="FunFam" id="1.10.560.10:FF:000001">
    <property type="entry name" value="60 kDa chaperonin"/>
    <property type="match status" value="1"/>
</dbReference>
<dbReference type="FunFam" id="3.50.7.10:FF:000001">
    <property type="entry name" value="60 kDa chaperonin"/>
    <property type="match status" value="1"/>
</dbReference>
<dbReference type="Gene3D" id="3.50.7.10">
    <property type="entry name" value="GroEL"/>
    <property type="match status" value="1"/>
</dbReference>
<dbReference type="Gene3D" id="1.10.560.10">
    <property type="entry name" value="GroEL-like equatorial domain"/>
    <property type="match status" value="1"/>
</dbReference>
<dbReference type="Gene3D" id="3.30.260.10">
    <property type="entry name" value="TCP-1-like chaperonin intermediate domain"/>
    <property type="match status" value="1"/>
</dbReference>
<dbReference type="HAMAP" id="MF_00600">
    <property type="entry name" value="CH60"/>
    <property type="match status" value="1"/>
</dbReference>
<dbReference type="InterPro" id="IPR018370">
    <property type="entry name" value="Chaperonin_Cpn60_CS"/>
</dbReference>
<dbReference type="InterPro" id="IPR001844">
    <property type="entry name" value="Cpn60/GroEL"/>
</dbReference>
<dbReference type="InterPro" id="IPR002423">
    <property type="entry name" value="Cpn60/GroEL/TCP-1"/>
</dbReference>
<dbReference type="InterPro" id="IPR027409">
    <property type="entry name" value="GroEL-like_apical_dom_sf"/>
</dbReference>
<dbReference type="InterPro" id="IPR027413">
    <property type="entry name" value="GROEL-like_equatorial_sf"/>
</dbReference>
<dbReference type="InterPro" id="IPR027410">
    <property type="entry name" value="TCP-1-like_intermed_sf"/>
</dbReference>
<dbReference type="NCBIfam" id="TIGR02348">
    <property type="entry name" value="GroEL"/>
    <property type="match status" value="1"/>
</dbReference>
<dbReference type="NCBIfam" id="NF000592">
    <property type="entry name" value="PRK00013.1"/>
    <property type="match status" value="1"/>
</dbReference>
<dbReference type="NCBIfam" id="NF009487">
    <property type="entry name" value="PRK12849.1"/>
    <property type="match status" value="1"/>
</dbReference>
<dbReference type="NCBIfam" id="NF009488">
    <property type="entry name" value="PRK12850.1"/>
    <property type="match status" value="1"/>
</dbReference>
<dbReference type="NCBIfam" id="NF009489">
    <property type="entry name" value="PRK12851.1"/>
    <property type="match status" value="1"/>
</dbReference>
<dbReference type="PANTHER" id="PTHR45633">
    <property type="entry name" value="60 KDA HEAT SHOCK PROTEIN, MITOCHONDRIAL"/>
    <property type="match status" value="1"/>
</dbReference>
<dbReference type="Pfam" id="PF00118">
    <property type="entry name" value="Cpn60_TCP1"/>
    <property type="match status" value="1"/>
</dbReference>
<dbReference type="PRINTS" id="PR00298">
    <property type="entry name" value="CHAPERONIN60"/>
</dbReference>
<dbReference type="SUPFAM" id="SSF52029">
    <property type="entry name" value="GroEL apical domain-like"/>
    <property type="match status" value="1"/>
</dbReference>
<dbReference type="SUPFAM" id="SSF48592">
    <property type="entry name" value="GroEL equatorial domain-like"/>
    <property type="match status" value="1"/>
</dbReference>
<dbReference type="SUPFAM" id="SSF54849">
    <property type="entry name" value="GroEL-intermediate domain like"/>
    <property type="match status" value="1"/>
</dbReference>
<dbReference type="PROSITE" id="PS00296">
    <property type="entry name" value="CHAPERONINS_CPN60"/>
    <property type="match status" value="1"/>
</dbReference>
<gene>
    <name evidence="1" type="primary">groEL</name>
    <name evidence="1" type="synonym">groL</name>
    <name type="ordered locus">lin2174</name>
</gene>
<reference key="1">
    <citation type="journal article" date="2001" name="Science">
        <title>Comparative genomics of Listeria species.</title>
        <authorList>
            <person name="Glaser P."/>
            <person name="Frangeul L."/>
            <person name="Buchrieser C."/>
            <person name="Rusniok C."/>
            <person name="Amend A."/>
            <person name="Baquero F."/>
            <person name="Berche P."/>
            <person name="Bloecker H."/>
            <person name="Brandt P."/>
            <person name="Chakraborty T."/>
            <person name="Charbit A."/>
            <person name="Chetouani F."/>
            <person name="Couve E."/>
            <person name="de Daruvar A."/>
            <person name="Dehoux P."/>
            <person name="Domann E."/>
            <person name="Dominguez-Bernal G."/>
            <person name="Duchaud E."/>
            <person name="Durant L."/>
            <person name="Dussurget O."/>
            <person name="Entian K.-D."/>
            <person name="Fsihi H."/>
            <person name="Garcia-del Portillo F."/>
            <person name="Garrido P."/>
            <person name="Gautier L."/>
            <person name="Goebel W."/>
            <person name="Gomez-Lopez N."/>
            <person name="Hain T."/>
            <person name="Hauf J."/>
            <person name="Jackson D."/>
            <person name="Jones L.-M."/>
            <person name="Kaerst U."/>
            <person name="Kreft J."/>
            <person name="Kuhn M."/>
            <person name="Kunst F."/>
            <person name="Kurapkat G."/>
            <person name="Madueno E."/>
            <person name="Maitournam A."/>
            <person name="Mata Vicente J."/>
            <person name="Ng E."/>
            <person name="Nedjari H."/>
            <person name="Nordsiek G."/>
            <person name="Novella S."/>
            <person name="de Pablos B."/>
            <person name="Perez-Diaz J.-C."/>
            <person name="Purcell R."/>
            <person name="Remmel B."/>
            <person name="Rose M."/>
            <person name="Schlueter T."/>
            <person name="Simoes N."/>
            <person name="Tierrez A."/>
            <person name="Vazquez-Boland J.-A."/>
            <person name="Voss H."/>
            <person name="Wehland J."/>
            <person name="Cossart P."/>
        </authorList>
    </citation>
    <scope>NUCLEOTIDE SEQUENCE [LARGE SCALE GENOMIC DNA]</scope>
    <source>
        <strain>ATCC BAA-680 / CLIP 11262</strain>
    </source>
</reference>